<dbReference type="EC" id="3.4.21.53" evidence="1"/>
<dbReference type="EMBL" id="AP008981">
    <property type="protein sequence ID" value="BAG41086.1"/>
    <property type="molecule type" value="Genomic_DNA"/>
</dbReference>
<dbReference type="SMR" id="B3CUN9"/>
<dbReference type="MEROPS" id="S16.001"/>
<dbReference type="KEGG" id="ott:OTT_1628"/>
<dbReference type="HOGENOM" id="CLU_004109_4_3_5"/>
<dbReference type="OrthoDB" id="9803599at2"/>
<dbReference type="Proteomes" id="UP000001033">
    <property type="component" value="Chromosome"/>
</dbReference>
<dbReference type="GO" id="GO:0005737">
    <property type="term" value="C:cytoplasm"/>
    <property type="evidence" value="ECO:0007669"/>
    <property type="project" value="UniProtKB-SubCell"/>
</dbReference>
<dbReference type="GO" id="GO:0005524">
    <property type="term" value="F:ATP binding"/>
    <property type="evidence" value="ECO:0007669"/>
    <property type="project" value="UniProtKB-UniRule"/>
</dbReference>
<dbReference type="GO" id="GO:0016887">
    <property type="term" value="F:ATP hydrolysis activity"/>
    <property type="evidence" value="ECO:0007669"/>
    <property type="project" value="UniProtKB-UniRule"/>
</dbReference>
<dbReference type="GO" id="GO:0004176">
    <property type="term" value="F:ATP-dependent peptidase activity"/>
    <property type="evidence" value="ECO:0007669"/>
    <property type="project" value="UniProtKB-UniRule"/>
</dbReference>
<dbReference type="GO" id="GO:0043565">
    <property type="term" value="F:sequence-specific DNA binding"/>
    <property type="evidence" value="ECO:0007669"/>
    <property type="project" value="UniProtKB-UniRule"/>
</dbReference>
<dbReference type="GO" id="GO:0004252">
    <property type="term" value="F:serine-type endopeptidase activity"/>
    <property type="evidence" value="ECO:0007669"/>
    <property type="project" value="UniProtKB-UniRule"/>
</dbReference>
<dbReference type="GO" id="GO:0034605">
    <property type="term" value="P:cellular response to heat"/>
    <property type="evidence" value="ECO:0007669"/>
    <property type="project" value="UniProtKB-UniRule"/>
</dbReference>
<dbReference type="GO" id="GO:0006515">
    <property type="term" value="P:protein quality control for misfolded or incompletely synthesized proteins"/>
    <property type="evidence" value="ECO:0007669"/>
    <property type="project" value="UniProtKB-UniRule"/>
</dbReference>
<dbReference type="CDD" id="cd19500">
    <property type="entry name" value="RecA-like_Lon"/>
    <property type="match status" value="1"/>
</dbReference>
<dbReference type="FunFam" id="1.20.5.5270:FF:000002">
    <property type="entry name" value="Lon protease homolog"/>
    <property type="match status" value="1"/>
</dbReference>
<dbReference type="FunFam" id="3.40.50.300:FF:000021">
    <property type="entry name" value="Lon protease homolog"/>
    <property type="match status" value="1"/>
</dbReference>
<dbReference type="Gene3D" id="1.10.8.60">
    <property type="match status" value="1"/>
</dbReference>
<dbReference type="Gene3D" id="1.20.5.5270">
    <property type="match status" value="1"/>
</dbReference>
<dbReference type="Gene3D" id="1.20.58.1480">
    <property type="match status" value="1"/>
</dbReference>
<dbReference type="Gene3D" id="3.30.230.10">
    <property type="match status" value="1"/>
</dbReference>
<dbReference type="Gene3D" id="2.30.130.40">
    <property type="entry name" value="LON domain-like"/>
    <property type="match status" value="1"/>
</dbReference>
<dbReference type="Gene3D" id="3.40.50.300">
    <property type="entry name" value="P-loop containing nucleotide triphosphate hydrolases"/>
    <property type="match status" value="1"/>
</dbReference>
<dbReference type="HAMAP" id="MF_01973">
    <property type="entry name" value="lon_bact"/>
    <property type="match status" value="1"/>
</dbReference>
<dbReference type="InterPro" id="IPR003593">
    <property type="entry name" value="AAA+_ATPase"/>
</dbReference>
<dbReference type="InterPro" id="IPR003959">
    <property type="entry name" value="ATPase_AAA_core"/>
</dbReference>
<dbReference type="InterPro" id="IPR027543">
    <property type="entry name" value="Lon_bac"/>
</dbReference>
<dbReference type="InterPro" id="IPR004815">
    <property type="entry name" value="Lon_bac/euk-typ"/>
</dbReference>
<dbReference type="InterPro" id="IPR054594">
    <property type="entry name" value="Lon_lid"/>
</dbReference>
<dbReference type="InterPro" id="IPR008269">
    <property type="entry name" value="Lon_proteolytic"/>
</dbReference>
<dbReference type="InterPro" id="IPR027065">
    <property type="entry name" value="Lon_Prtase"/>
</dbReference>
<dbReference type="InterPro" id="IPR003111">
    <property type="entry name" value="Lon_prtase_N"/>
</dbReference>
<dbReference type="InterPro" id="IPR046336">
    <property type="entry name" value="Lon_prtase_N_sf"/>
</dbReference>
<dbReference type="InterPro" id="IPR027417">
    <property type="entry name" value="P-loop_NTPase"/>
</dbReference>
<dbReference type="InterPro" id="IPR008268">
    <property type="entry name" value="Peptidase_S16_AS"/>
</dbReference>
<dbReference type="InterPro" id="IPR015947">
    <property type="entry name" value="PUA-like_sf"/>
</dbReference>
<dbReference type="InterPro" id="IPR020568">
    <property type="entry name" value="Ribosomal_Su5_D2-typ_SF"/>
</dbReference>
<dbReference type="InterPro" id="IPR014721">
    <property type="entry name" value="Ribsml_uS5_D2-typ_fold_subgr"/>
</dbReference>
<dbReference type="NCBIfam" id="TIGR00763">
    <property type="entry name" value="lon"/>
    <property type="match status" value="1"/>
</dbReference>
<dbReference type="PANTHER" id="PTHR10046">
    <property type="entry name" value="ATP DEPENDENT LON PROTEASE FAMILY MEMBER"/>
    <property type="match status" value="1"/>
</dbReference>
<dbReference type="Pfam" id="PF00004">
    <property type="entry name" value="AAA"/>
    <property type="match status" value="1"/>
</dbReference>
<dbReference type="Pfam" id="PF05362">
    <property type="entry name" value="Lon_C"/>
    <property type="match status" value="1"/>
</dbReference>
<dbReference type="Pfam" id="PF22667">
    <property type="entry name" value="Lon_lid"/>
    <property type="match status" value="1"/>
</dbReference>
<dbReference type="Pfam" id="PF02190">
    <property type="entry name" value="LON_substr_bdg"/>
    <property type="match status" value="1"/>
</dbReference>
<dbReference type="PIRSF" id="PIRSF001174">
    <property type="entry name" value="Lon_proteas"/>
    <property type="match status" value="1"/>
</dbReference>
<dbReference type="PRINTS" id="PR00830">
    <property type="entry name" value="ENDOLAPTASE"/>
</dbReference>
<dbReference type="SMART" id="SM00382">
    <property type="entry name" value="AAA"/>
    <property type="match status" value="1"/>
</dbReference>
<dbReference type="SMART" id="SM00464">
    <property type="entry name" value="LON"/>
    <property type="match status" value="1"/>
</dbReference>
<dbReference type="SUPFAM" id="SSF52540">
    <property type="entry name" value="P-loop containing nucleoside triphosphate hydrolases"/>
    <property type="match status" value="1"/>
</dbReference>
<dbReference type="SUPFAM" id="SSF88697">
    <property type="entry name" value="PUA domain-like"/>
    <property type="match status" value="1"/>
</dbReference>
<dbReference type="SUPFAM" id="SSF54211">
    <property type="entry name" value="Ribosomal protein S5 domain 2-like"/>
    <property type="match status" value="1"/>
</dbReference>
<dbReference type="PROSITE" id="PS51787">
    <property type="entry name" value="LON_N"/>
    <property type="match status" value="1"/>
</dbReference>
<dbReference type="PROSITE" id="PS51786">
    <property type="entry name" value="LON_PROTEOLYTIC"/>
    <property type="match status" value="1"/>
</dbReference>
<dbReference type="PROSITE" id="PS01046">
    <property type="entry name" value="LON_SER"/>
    <property type="match status" value="1"/>
</dbReference>
<organism>
    <name type="scientific">Orientia tsutsugamushi (strain Ikeda)</name>
    <name type="common">Rickettsia tsutsugamushi</name>
    <dbReference type="NCBI Taxonomy" id="334380"/>
    <lineage>
        <taxon>Bacteria</taxon>
        <taxon>Pseudomonadati</taxon>
        <taxon>Pseudomonadota</taxon>
        <taxon>Alphaproteobacteria</taxon>
        <taxon>Rickettsiales</taxon>
        <taxon>Rickettsiaceae</taxon>
        <taxon>Rickettsieae</taxon>
        <taxon>Orientia</taxon>
    </lineage>
</organism>
<name>LON_ORITI</name>
<feature type="chain" id="PRO_0000396588" description="Lon protease">
    <location>
        <begin position="1"/>
        <end position="790"/>
    </location>
</feature>
<feature type="domain" description="Lon N-terminal" evidence="3">
    <location>
        <begin position="13"/>
        <end position="209"/>
    </location>
</feature>
<feature type="domain" description="Lon proteolytic" evidence="2">
    <location>
        <begin position="598"/>
        <end position="779"/>
    </location>
</feature>
<feature type="active site" evidence="1">
    <location>
        <position position="685"/>
    </location>
</feature>
<feature type="active site" evidence="1">
    <location>
        <position position="728"/>
    </location>
</feature>
<feature type="binding site" evidence="1">
    <location>
        <begin position="362"/>
        <end position="369"/>
    </location>
    <ligand>
        <name>ATP</name>
        <dbReference type="ChEBI" id="CHEBI:30616"/>
    </ligand>
</feature>
<keyword id="KW-0067">ATP-binding</keyword>
<keyword id="KW-0963">Cytoplasm</keyword>
<keyword id="KW-0378">Hydrolase</keyword>
<keyword id="KW-0547">Nucleotide-binding</keyword>
<keyword id="KW-0645">Protease</keyword>
<keyword id="KW-0720">Serine protease</keyword>
<keyword id="KW-0346">Stress response</keyword>
<gene>
    <name evidence="1" type="primary">lon</name>
    <name type="ordered locus">OTT_1628</name>
</gene>
<protein>
    <recommendedName>
        <fullName evidence="1">Lon protease</fullName>
        <ecNumber evidence="1">3.4.21.53</ecNumber>
    </recommendedName>
    <alternativeName>
        <fullName evidence="1">ATP-dependent protease La</fullName>
    </alternativeName>
</protein>
<accession>B3CUN9</accession>
<evidence type="ECO:0000255" key="1">
    <source>
        <dbReference type="HAMAP-Rule" id="MF_01973"/>
    </source>
</evidence>
<evidence type="ECO:0000255" key="2">
    <source>
        <dbReference type="PROSITE-ProRule" id="PRU01122"/>
    </source>
</evidence>
<evidence type="ECO:0000255" key="3">
    <source>
        <dbReference type="PROSITE-ProRule" id="PRU01123"/>
    </source>
</evidence>
<comment type="function">
    <text evidence="1">ATP-dependent serine protease that mediates the selective degradation of mutant and abnormal proteins as well as certain short-lived regulatory proteins. Required for cellular homeostasis and for survival from DNA damage and developmental changes induced by stress. Degrades polypeptides processively to yield small peptide fragments that are 5 to 10 amino acids long. Binds to DNA in a double-stranded, site-specific manner.</text>
</comment>
<comment type="catalytic activity">
    <reaction evidence="1">
        <text>Hydrolysis of proteins in presence of ATP.</text>
        <dbReference type="EC" id="3.4.21.53"/>
    </reaction>
</comment>
<comment type="subunit">
    <text evidence="1">Homohexamer. Organized in a ring with a central cavity.</text>
</comment>
<comment type="subcellular location">
    <subcellularLocation>
        <location evidence="1">Cytoplasm</location>
    </subcellularLocation>
</comment>
<comment type="induction">
    <text evidence="1">By heat shock.</text>
</comment>
<comment type="similarity">
    <text evidence="1">Belongs to the peptidase S16 family.</text>
</comment>
<sequence>MAQVLNDISNRVLPLFPIRNTVLFPGLVLPILIGRDDSVKNLLRLGNDSENQHTILLTTQKNADDIKPSINSLYKIGVLAKITELVQLPNDNYKILIKVLDRVKLTIRRSHDLLVAEYVIVPDDEINNADEIKDKLANAIVLFNKYIRLSKKINPDLLVHVLSYTNQSYVVNALAANLICNVANKQSLLEITDVKQRIERLTDHVAKEIIIMETDELITSKAQKNLEKMQRDCFLNEKMKIIKNVLGVDDEKSDIAELQKKIDTLHLSKEAKAKAESELKKLKMMNPISAEAALTRNYLDILLGLPWKKEKESKININIDKALQDLNADHHGLEKVKERITEYLAVLQRTKKSIGTILCFIGPPGVGKTSLVKSIAEATKCKYAKFALGGVRDEAEIRGHRKTYIGAMPGKIISLIKRENSNNLVILLDEIDKISRDSRGDPAFALLEVLDPEQNSRFQDNYLEVEYDLSKVLFIATANSFNFPIPLRDRMEIIQIPGYVEGEKLEIAKHHLIPKQIKNNGLKNTEISFSDEAILELIRYYTREAGVRGLERKIGGICRKVLKKILSSKDIKSESVSKENIKDYLGSRKYKYGLAEDDNQVGITIGLAYTETGGDLIWVEAVMIPGKGKVKATGKLGDVMKESSQTAFSYFCSRAQKYNVKYEQYHKYDIHIHFPEGAIPKDGPSAGIAIFTTIVSLMTGIPVKLSVAMTGEITLRGRILPIGGLKEKLMAAKRGGIKTVIIPEGNTSDLEDIPNSIKNDLDIIPLSEADQVLDIALATTVTNSPAETAC</sequence>
<proteinExistence type="inferred from homology"/>
<reference key="1">
    <citation type="journal article" date="2008" name="DNA Res.">
        <title>The whole-genome sequencing of the obligate intracellular bacterium Orientia tsutsugamushi revealed massive gene amplification during reductive genome evolution.</title>
        <authorList>
            <person name="Nakayama K."/>
            <person name="Yamashita A."/>
            <person name="Kurokawa K."/>
            <person name="Morimoto T."/>
            <person name="Ogawa M."/>
            <person name="Fukuhara M."/>
            <person name="Urakami H."/>
            <person name="Ohnishi M."/>
            <person name="Uchiyama I."/>
            <person name="Ogura Y."/>
            <person name="Ooka T."/>
            <person name="Oshima K."/>
            <person name="Tamura A."/>
            <person name="Hattori M."/>
            <person name="Hayashi T."/>
        </authorList>
    </citation>
    <scope>NUCLEOTIDE SEQUENCE [LARGE SCALE GENOMIC DNA]</scope>
    <source>
        <strain>Ikeda</strain>
    </source>
</reference>